<gene>
    <name type="ordered locus">SYNW1693</name>
</gene>
<reference key="1">
    <citation type="journal article" date="2003" name="Nature">
        <title>The genome of a motile marine Synechococcus.</title>
        <authorList>
            <person name="Palenik B."/>
            <person name="Brahamsha B."/>
            <person name="Larimer F.W."/>
            <person name="Land M.L."/>
            <person name="Hauser L."/>
            <person name="Chain P."/>
            <person name="Lamerdin J.E."/>
            <person name="Regala W."/>
            <person name="Allen E.E."/>
            <person name="McCarren J."/>
            <person name="Paulsen I.T."/>
            <person name="Dufresne A."/>
            <person name="Partensky F."/>
            <person name="Webb E.A."/>
            <person name="Waterbury J."/>
        </authorList>
    </citation>
    <scope>NUCLEOTIDE SEQUENCE [LARGE SCALE GENOMIC DNA]</scope>
    <source>
        <strain>WH8102</strain>
    </source>
</reference>
<feature type="chain" id="PRO_0000171888" description="Putative membrane protein insertion efficiency factor">
    <location>
        <begin position="1"/>
        <end position="66"/>
    </location>
</feature>
<name>YIDD_PARMW</name>
<evidence type="ECO:0000255" key="1">
    <source>
        <dbReference type="HAMAP-Rule" id="MF_00386"/>
    </source>
</evidence>
<dbReference type="EMBL" id="BX569693">
    <property type="protein sequence ID" value="CAE08208.1"/>
    <property type="molecule type" value="Genomic_DNA"/>
</dbReference>
<dbReference type="STRING" id="84588.SYNW1693"/>
<dbReference type="KEGG" id="syw:SYNW1693"/>
<dbReference type="eggNOG" id="COG0759">
    <property type="taxonomic scope" value="Bacteria"/>
</dbReference>
<dbReference type="HOGENOM" id="CLU_144811_6_0_3"/>
<dbReference type="Proteomes" id="UP000001422">
    <property type="component" value="Chromosome"/>
</dbReference>
<dbReference type="GO" id="GO:0005886">
    <property type="term" value="C:plasma membrane"/>
    <property type="evidence" value="ECO:0007669"/>
    <property type="project" value="UniProtKB-SubCell"/>
</dbReference>
<dbReference type="HAMAP" id="MF_00386">
    <property type="entry name" value="UPF0161_YidD"/>
    <property type="match status" value="1"/>
</dbReference>
<dbReference type="InterPro" id="IPR002696">
    <property type="entry name" value="Membr_insert_effic_factor_YidD"/>
</dbReference>
<dbReference type="NCBIfam" id="TIGR00278">
    <property type="entry name" value="membrane protein insertion efficiency factor YidD"/>
    <property type="match status" value="1"/>
</dbReference>
<dbReference type="PANTHER" id="PTHR33383">
    <property type="entry name" value="MEMBRANE PROTEIN INSERTION EFFICIENCY FACTOR-RELATED"/>
    <property type="match status" value="1"/>
</dbReference>
<dbReference type="PANTHER" id="PTHR33383:SF1">
    <property type="entry name" value="MEMBRANE PROTEIN INSERTION EFFICIENCY FACTOR-RELATED"/>
    <property type="match status" value="1"/>
</dbReference>
<dbReference type="Pfam" id="PF01809">
    <property type="entry name" value="YidD"/>
    <property type="match status" value="1"/>
</dbReference>
<dbReference type="SMART" id="SM01234">
    <property type="entry name" value="Haemolytic"/>
    <property type="match status" value="1"/>
</dbReference>
<organism>
    <name type="scientific">Parasynechococcus marenigrum (strain WH8102)</name>
    <dbReference type="NCBI Taxonomy" id="84588"/>
    <lineage>
        <taxon>Bacteria</taxon>
        <taxon>Bacillati</taxon>
        <taxon>Cyanobacteriota</taxon>
        <taxon>Cyanophyceae</taxon>
        <taxon>Synechococcales</taxon>
        <taxon>Prochlorococcaceae</taxon>
        <taxon>Parasynechococcus</taxon>
        <taxon>Parasynechococcus marenigrum</taxon>
    </lineage>
</organism>
<accession>Q7U5L0</accession>
<proteinExistence type="inferred from homology"/>
<protein>
    <recommendedName>
        <fullName evidence="1">Putative membrane protein insertion efficiency factor</fullName>
    </recommendedName>
</protein>
<comment type="function">
    <text evidence="1">Could be involved in insertion of integral membrane proteins into the membrane.</text>
</comment>
<comment type="subcellular location">
    <subcellularLocation>
        <location evidence="1">Cell inner membrane</location>
        <topology evidence="1">Peripheral membrane protein</topology>
        <orientation evidence="1">Cytoplasmic side</orientation>
    </subcellularLocation>
</comment>
<comment type="similarity">
    <text evidence="1">Belongs to the UPF0161 family.</text>
</comment>
<keyword id="KW-0997">Cell inner membrane</keyword>
<keyword id="KW-1003">Cell membrane</keyword>
<keyword id="KW-0472">Membrane</keyword>
<sequence length="66" mass="7419">MLAGIGFYRRFISPLIGPRCRFTPTCSAYGLEAIQRHGPWKGGWLTVKRLLRCHPFTPCGCDPVPD</sequence>